<reference key="1">
    <citation type="submission" date="2008-02" db="EMBL/GenBank/DDBJ databases">
        <title>Complete sequence of Yersinia pseudotuberculosis YPIII.</title>
        <authorList>
            <consortium name="US DOE Joint Genome Institute"/>
            <person name="Copeland A."/>
            <person name="Lucas S."/>
            <person name="Lapidus A."/>
            <person name="Glavina del Rio T."/>
            <person name="Dalin E."/>
            <person name="Tice H."/>
            <person name="Bruce D."/>
            <person name="Goodwin L."/>
            <person name="Pitluck S."/>
            <person name="Munk A.C."/>
            <person name="Brettin T."/>
            <person name="Detter J.C."/>
            <person name="Han C."/>
            <person name="Tapia R."/>
            <person name="Schmutz J."/>
            <person name="Larimer F."/>
            <person name="Land M."/>
            <person name="Hauser L."/>
            <person name="Challacombe J.F."/>
            <person name="Green L."/>
            <person name="Lindler L.E."/>
            <person name="Nikolich M.P."/>
            <person name="Richardson P."/>
        </authorList>
    </citation>
    <scope>NUCLEOTIDE SEQUENCE [LARGE SCALE GENOMIC DNA]</scope>
    <source>
        <strain>YPIII</strain>
    </source>
</reference>
<dbReference type="EMBL" id="CP000950">
    <property type="protein sequence ID" value="ACA67368.1"/>
    <property type="molecule type" value="Genomic_DNA"/>
</dbReference>
<dbReference type="RefSeq" id="WP_002212132.1">
    <property type="nucleotide sequence ID" value="NZ_CP009792.1"/>
</dbReference>
<dbReference type="SMR" id="B1JQG1"/>
<dbReference type="GeneID" id="96662369"/>
<dbReference type="KEGG" id="ypy:YPK_1067"/>
<dbReference type="PATRIC" id="fig|502800.11.peg.1699"/>
<dbReference type="GO" id="GO:0005737">
    <property type="term" value="C:cytoplasm"/>
    <property type="evidence" value="ECO:0007669"/>
    <property type="project" value="UniProtKB-SubCell"/>
</dbReference>
<dbReference type="GO" id="GO:0003746">
    <property type="term" value="F:translation elongation factor activity"/>
    <property type="evidence" value="ECO:0007669"/>
    <property type="project" value="UniProtKB-UniRule"/>
</dbReference>
<dbReference type="CDD" id="cd14275">
    <property type="entry name" value="UBA_EF-Ts"/>
    <property type="match status" value="1"/>
</dbReference>
<dbReference type="FunFam" id="1.10.286.20:FF:000001">
    <property type="entry name" value="Elongation factor Ts"/>
    <property type="match status" value="1"/>
</dbReference>
<dbReference type="FunFam" id="1.10.8.10:FF:000001">
    <property type="entry name" value="Elongation factor Ts"/>
    <property type="match status" value="1"/>
</dbReference>
<dbReference type="FunFam" id="3.30.479.20:FF:000001">
    <property type="entry name" value="Elongation factor Ts"/>
    <property type="match status" value="1"/>
</dbReference>
<dbReference type="Gene3D" id="1.10.286.20">
    <property type="match status" value="1"/>
</dbReference>
<dbReference type="Gene3D" id="1.10.8.10">
    <property type="entry name" value="DNA helicase RuvA subunit, C-terminal domain"/>
    <property type="match status" value="1"/>
</dbReference>
<dbReference type="Gene3D" id="3.30.479.20">
    <property type="entry name" value="Elongation factor Ts, dimerisation domain"/>
    <property type="match status" value="2"/>
</dbReference>
<dbReference type="HAMAP" id="MF_00050">
    <property type="entry name" value="EF_Ts"/>
    <property type="match status" value="1"/>
</dbReference>
<dbReference type="InterPro" id="IPR036402">
    <property type="entry name" value="EF-Ts_dimer_sf"/>
</dbReference>
<dbReference type="InterPro" id="IPR001816">
    <property type="entry name" value="Transl_elong_EFTs/EF1B"/>
</dbReference>
<dbReference type="InterPro" id="IPR014039">
    <property type="entry name" value="Transl_elong_EFTs/EF1B_dimer"/>
</dbReference>
<dbReference type="InterPro" id="IPR018101">
    <property type="entry name" value="Transl_elong_Ts_CS"/>
</dbReference>
<dbReference type="InterPro" id="IPR009060">
    <property type="entry name" value="UBA-like_sf"/>
</dbReference>
<dbReference type="NCBIfam" id="TIGR00116">
    <property type="entry name" value="tsf"/>
    <property type="match status" value="1"/>
</dbReference>
<dbReference type="PANTHER" id="PTHR11741">
    <property type="entry name" value="ELONGATION FACTOR TS"/>
    <property type="match status" value="1"/>
</dbReference>
<dbReference type="PANTHER" id="PTHR11741:SF0">
    <property type="entry name" value="ELONGATION FACTOR TS, MITOCHONDRIAL"/>
    <property type="match status" value="1"/>
</dbReference>
<dbReference type="Pfam" id="PF00889">
    <property type="entry name" value="EF_TS"/>
    <property type="match status" value="1"/>
</dbReference>
<dbReference type="SUPFAM" id="SSF54713">
    <property type="entry name" value="Elongation factor Ts (EF-Ts), dimerisation domain"/>
    <property type="match status" value="2"/>
</dbReference>
<dbReference type="SUPFAM" id="SSF46934">
    <property type="entry name" value="UBA-like"/>
    <property type="match status" value="1"/>
</dbReference>
<dbReference type="PROSITE" id="PS01127">
    <property type="entry name" value="EF_TS_2"/>
    <property type="match status" value="1"/>
</dbReference>
<accession>B1JQG1</accession>
<gene>
    <name evidence="1" type="primary">tsf</name>
    <name type="ordered locus">YPK_1067</name>
</gene>
<name>EFTS_YERPY</name>
<evidence type="ECO:0000255" key="1">
    <source>
        <dbReference type="HAMAP-Rule" id="MF_00050"/>
    </source>
</evidence>
<comment type="function">
    <text evidence="1">Associates with the EF-Tu.GDP complex and induces the exchange of GDP to GTP. It remains bound to the aminoacyl-tRNA.EF-Tu.GTP complex up to the GTP hydrolysis stage on the ribosome.</text>
</comment>
<comment type="subcellular location">
    <subcellularLocation>
        <location evidence="1">Cytoplasm</location>
    </subcellularLocation>
</comment>
<comment type="similarity">
    <text evidence="1">Belongs to the EF-Ts family.</text>
</comment>
<sequence length="285" mass="30721">MVAITAALVKELRERTAAGMMECKKALVEANGDIELAIDNMRKSGQAKAAKKAGRIAAEGIILAKVSADGKYGVILELNCETDFVAKDAGFKAFGEEVINAALAEKIADIDVLKAKFEEQRANLVAKIGENINIRRVAVLEGDILGTYLHGARIGVMVAATGADEELVKHIAMHIAASKPEYVKPDDVPAEVVAREHQIQLDIAIESGKPREIAEKMVEGRMRKFTGEVSLTGQNFVMDPSKTVGDLLKENNADVVNFIRFEVGEGIEKVETDFAAEVAAMSKQS</sequence>
<organism>
    <name type="scientific">Yersinia pseudotuberculosis serotype O:3 (strain YPIII)</name>
    <dbReference type="NCBI Taxonomy" id="502800"/>
    <lineage>
        <taxon>Bacteria</taxon>
        <taxon>Pseudomonadati</taxon>
        <taxon>Pseudomonadota</taxon>
        <taxon>Gammaproteobacteria</taxon>
        <taxon>Enterobacterales</taxon>
        <taxon>Yersiniaceae</taxon>
        <taxon>Yersinia</taxon>
    </lineage>
</organism>
<keyword id="KW-0963">Cytoplasm</keyword>
<keyword id="KW-0251">Elongation factor</keyword>
<keyword id="KW-0648">Protein biosynthesis</keyword>
<protein>
    <recommendedName>
        <fullName evidence="1">Elongation factor Ts</fullName>
        <shortName evidence="1">EF-Ts</shortName>
    </recommendedName>
</protein>
<feature type="chain" id="PRO_1000189909" description="Elongation factor Ts">
    <location>
        <begin position="1"/>
        <end position="285"/>
    </location>
</feature>
<feature type="region of interest" description="Involved in Mg(2+) ion dislocation from EF-Tu" evidence="1">
    <location>
        <begin position="82"/>
        <end position="85"/>
    </location>
</feature>
<proteinExistence type="inferred from homology"/>